<feature type="initiator methionine" description="Removed" evidence="1">
    <location>
        <position position="1"/>
    </location>
</feature>
<feature type="chain" id="PRO_0000359666" description="Photosystem II D2 protein">
    <location>
        <begin position="2"/>
        <end position="353"/>
    </location>
</feature>
<feature type="transmembrane region" description="Helical" evidence="2">
    <location>
        <begin position="41"/>
        <end position="61"/>
    </location>
</feature>
<feature type="transmembrane region" description="Helical" evidence="2">
    <location>
        <begin position="125"/>
        <end position="141"/>
    </location>
</feature>
<feature type="transmembrane region" description="Helical" evidence="2">
    <location>
        <begin position="153"/>
        <end position="166"/>
    </location>
</feature>
<feature type="transmembrane region" description="Helical" evidence="2">
    <location>
        <begin position="208"/>
        <end position="228"/>
    </location>
</feature>
<feature type="transmembrane region" description="Helical" evidence="2">
    <location>
        <begin position="279"/>
        <end position="295"/>
    </location>
</feature>
<feature type="binding site" description="axial binding residue" evidence="2">
    <location>
        <position position="118"/>
    </location>
    <ligand>
        <name>chlorophyll a</name>
        <dbReference type="ChEBI" id="CHEBI:58416"/>
        <label>ChlzD2</label>
    </ligand>
    <ligandPart>
        <name>Mg</name>
        <dbReference type="ChEBI" id="CHEBI:25107"/>
    </ligandPart>
</feature>
<feature type="binding site" evidence="2">
    <location>
        <position position="130"/>
    </location>
    <ligand>
        <name>pheophytin a</name>
        <dbReference type="ChEBI" id="CHEBI:136840"/>
        <label>D2</label>
    </ligand>
</feature>
<feature type="binding site" evidence="2">
    <location>
        <position position="143"/>
    </location>
    <ligand>
        <name>pheophytin a</name>
        <dbReference type="ChEBI" id="CHEBI:136840"/>
        <label>D2</label>
    </ligand>
</feature>
<feature type="binding site" description="axial binding residue" evidence="2">
    <location>
        <position position="198"/>
    </location>
    <ligand>
        <name>chlorophyll a</name>
        <dbReference type="ChEBI" id="CHEBI:58416"/>
        <label>PD2</label>
    </ligand>
    <ligandPart>
        <name>Mg</name>
        <dbReference type="ChEBI" id="CHEBI:25107"/>
    </ligandPart>
</feature>
<feature type="binding site" evidence="2">
    <location>
        <position position="215"/>
    </location>
    <ligand>
        <name>a plastoquinone</name>
        <dbReference type="ChEBI" id="CHEBI:17757"/>
        <label>Q(A)</label>
    </ligand>
</feature>
<feature type="binding site" evidence="2">
    <location>
        <position position="215"/>
    </location>
    <ligand>
        <name>Fe cation</name>
        <dbReference type="ChEBI" id="CHEBI:24875"/>
        <note>ligand shared with heterodimeric partner</note>
    </ligand>
</feature>
<feature type="binding site" evidence="2">
    <location>
        <position position="262"/>
    </location>
    <ligand>
        <name>a plastoquinone</name>
        <dbReference type="ChEBI" id="CHEBI:17757"/>
        <label>Q(A)</label>
    </ligand>
</feature>
<feature type="binding site" evidence="2">
    <location>
        <position position="269"/>
    </location>
    <ligand>
        <name>Fe cation</name>
        <dbReference type="ChEBI" id="CHEBI:24875"/>
        <note>ligand shared with heterodimeric partner</note>
    </ligand>
</feature>
<feature type="modified residue" description="N-acetylthreonine" evidence="1">
    <location>
        <position position="2"/>
    </location>
</feature>
<feature type="modified residue" description="Phosphothreonine" evidence="1">
    <location>
        <position position="2"/>
    </location>
</feature>
<accession>A8Y9F5</accession>
<proteinExistence type="inferred from homology"/>
<gene>
    <name evidence="2" type="primary">psbD</name>
    <name type="ordered locus">LopeCp009</name>
</gene>
<comment type="function">
    <text evidence="2">Photosystem II (PSII) is a light-driven water:plastoquinone oxidoreductase that uses light energy to abstract electrons from H(2)O, generating O(2) and a proton gradient subsequently used for ATP formation. It consists of a core antenna complex that captures photons, and an electron transfer chain that converts photonic excitation into a charge separation. The D1/D2 (PsbA/PsbD) reaction center heterodimer binds P680, the primary electron donor of PSII as well as several subsequent electron acceptors. D2 is needed for assembly of a stable PSII complex.</text>
</comment>
<comment type="catalytic activity">
    <reaction evidence="2">
        <text>2 a plastoquinone + 4 hnu + 2 H2O = 2 a plastoquinol + O2</text>
        <dbReference type="Rhea" id="RHEA:36359"/>
        <dbReference type="Rhea" id="RHEA-COMP:9561"/>
        <dbReference type="Rhea" id="RHEA-COMP:9562"/>
        <dbReference type="ChEBI" id="CHEBI:15377"/>
        <dbReference type="ChEBI" id="CHEBI:15379"/>
        <dbReference type="ChEBI" id="CHEBI:17757"/>
        <dbReference type="ChEBI" id="CHEBI:30212"/>
        <dbReference type="ChEBI" id="CHEBI:62192"/>
        <dbReference type="EC" id="1.10.3.9"/>
    </reaction>
</comment>
<comment type="cofactor">
    <text evidence="2">The D1/D2 heterodimer binds P680, chlorophylls that are the primary electron donor of PSII, and subsequent electron acceptors. It shares a non-heme iron and each subunit binds pheophytin, quinone, additional chlorophylls, carotenoids and lipids. There is also a Cl(-1) ion associated with D1 and D2, which is required for oxygen evolution. The PSII complex binds additional chlorophylls, carotenoids and specific lipids.</text>
</comment>
<comment type="subunit">
    <text evidence="2">PSII is composed of 1 copy each of membrane proteins PsbA, PsbB, PsbC, PsbD, PsbE, PsbF, PsbH, PsbI, PsbJ, PsbK, PsbL, PsbM, PsbT, PsbX, PsbY, PsbZ, Psb30/Ycf12, at least 3 peripheral proteins of the oxygen-evolving complex and a large number of cofactors. It forms dimeric complexes.</text>
</comment>
<comment type="subcellular location">
    <subcellularLocation>
        <location evidence="2">Plastid</location>
        <location evidence="2">Chloroplast thylakoid membrane</location>
        <topology evidence="2">Multi-pass membrane protein</topology>
    </subcellularLocation>
</comment>
<comment type="miscellaneous">
    <text evidence="2">2 of the reaction center chlorophylls (ChlD1 and ChlD2) are entirely coordinated by water.</text>
</comment>
<comment type="similarity">
    <text evidence="2">Belongs to the reaction center PufL/M/PsbA/D family.</text>
</comment>
<sequence length="353" mass="39586">MTIVLGRVPKEENDLFDTMDDWLRRDRFVFVGWSGLLLFPCAYFALGGWFTGTTFVTSWYTHGLASSYLEGCNFLTAAVSTPANSLAHSLLLLWGPEAQGDFTRWCQLGGLWTFVALHGAFALIGFMLRQFELARSVQLRPYNAISFSGPIAVFVSVFLIYPLGQSGWFFAPSFGVAAIFRFILFFQGFHNWTLNPFHMMGVAGVLGAALLCAIHGATVENTLFEDGDGANTFRAFNPTQAEETYSMVTANRFWSQIFGVAFSNKRWLHFFMLFVPVTGLWMSAIGVVGLALNLRAYDFVSQEIRAAEDPEFETFYTKNILLNEGIRAWMAAQDQPHENLIFPEEVLPRGNAL</sequence>
<reference key="1">
    <citation type="journal article" date="2008" name="PLoS ONE">
        <title>An optimized chloroplast DNA extraction protocol for grasses (Poaceae) proves suitable for whole plastid genome sequencing and SNP detection.</title>
        <authorList>
            <person name="Diekmann K."/>
            <person name="Hodkinson T.R."/>
            <person name="Fricke E."/>
            <person name="Barth S."/>
        </authorList>
    </citation>
    <scope>NUCLEOTIDE SEQUENCE [LARGE SCALE GENOMIC DNA]</scope>
    <source>
        <strain>cv. Cashel</strain>
    </source>
</reference>
<geneLocation type="chloroplast"/>
<evidence type="ECO:0000250" key="1">
    <source>
        <dbReference type="UniProtKB" id="P56761"/>
    </source>
</evidence>
<evidence type="ECO:0000255" key="2">
    <source>
        <dbReference type="HAMAP-Rule" id="MF_01383"/>
    </source>
</evidence>
<dbReference type="EC" id="1.10.3.9" evidence="2"/>
<dbReference type="EMBL" id="AM777385">
    <property type="protein sequence ID" value="CAO85961.1"/>
    <property type="molecule type" value="Genomic_DNA"/>
</dbReference>
<dbReference type="RefSeq" id="YP_001531268.1">
    <property type="nucleotide sequence ID" value="NC_009950.1"/>
</dbReference>
<dbReference type="SMR" id="A8Y9F5"/>
<dbReference type="GeneID" id="5696600"/>
<dbReference type="KEGG" id="lper:5696600"/>
<dbReference type="GO" id="GO:0009535">
    <property type="term" value="C:chloroplast thylakoid membrane"/>
    <property type="evidence" value="ECO:0007669"/>
    <property type="project" value="UniProtKB-SubCell"/>
</dbReference>
<dbReference type="GO" id="GO:0009523">
    <property type="term" value="C:photosystem II"/>
    <property type="evidence" value="ECO:0007669"/>
    <property type="project" value="UniProtKB-KW"/>
</dbReference>
<dbReference type="GO" id="GO:0016168">
    <property type="term" value="F:chlorophyll binding"/>
    <property type="evidence" value="ECO:0007669"/>
    <property type="project" value="UniProtKB-UniRule"/>
</dbReference>
<dbReference type="GO" id="GO:0045156">
    <property type="term" value="F:electron transporter, transferring electrons within the cyclic electron transport pathway of photosynthesis activity"/>
    <property type="evidence" value="ECO:0007669"/>
    <property type="project" value="InterPro"/>
</dbReference>
<dbReference type="GO" id="GO:0005506">
    <property type="term" value="F:iron ion binding"/>
    <property type="evidence" value="ECO:0007669"/>
    <property type="project" value="UniProtKB-UniRule"/>
</dbReference>
<dbReference type="GO" id="GO:0010242">
    <property type="term" value="F:oxygen evolving activity"/>
    <property type="evidence" value="ECO:0007669"/>
    <property type="project" value="UniProtKB-EC"/>
</dbReference>
<dbReference type="GO" id="GO:0009772">
    <property type="term" value="P:photosynthetic electron transport in photosystem II"/>
    <property type="evidence" value="ECO:0007669"/>
    <property type="project" value="InterPro"/>
</dbReference>
<dbReference type="CDD" id="cd09288">
    <property type="entry name" value="Photosystem-II_D2"/>
    <property type="match status" value="1"/>
</dbReference>
<dbReference type="FunFam" id="1.20.85.10:FF:000001">
    <property type="entry name" value="photosystem II D2 protein-like"/>
    <property type="match status" value="1"/>
</dbReference>
<dbReference type="Gene3D" id="1.20.85.10">
    <property type="entry name" value="Photosystem II protein D1-like"/>
    <property type="match status" value="1"/>
</dbReference>
<dbReference type="HAMAP" id="MF_01383">
    <property type="entry name" value="PSII_PsbD_D2"/>
    <property type="match status" value="1"/>
</dbReference>
<dbReference type="InterPro" id="IPR055266">
    <property type="entry name" value="D1/D2"/>
</dbReference>
<dbReference type="InterPro" id="IPR036854">
    <property type="entry name" value="Photo_II_D1/D2_sf"/>
</dbReference>
<dbReference type="InterPro" id="IPR000484">
    <property type="entry name" value="Photo_RC_L/M"/>
</dbReference>
<dbReference type="InterPro" id="IPR055265">
    <property type="entry name" value="Photo_RC_L/M_CS"/>
</dbReference>
<dbReference type="InterPro" id="IPR005868">
    <property type="entry name" value="PSII_PsbD/D2"/>
</dbReference>
<dbReference type="NCBIfam" id="TIGR01152">
    <property type="entry name" value="psbD"/>
    <property type="match status" value="1"/>
</dbReference>
<dbReference type="PANTHER" id="PTHR33149:SF12">
    <property type="entry name" value="PHOTOSYSTEM II D2 PROTEIN"/>
    <property type="match status" value="1"/>
</dbReference>
<dbReference type="PANTHER" id="PTHR33149">
    <property type="entry name" value="PHOTOSYSTEM II PROTEIN D1"/>
    <property type="match status" value="1"/>
</dbReference>
<dbReference type="Pfam" id="PF00124">
    <property type="entry name" value="Photo_RC"/>
    <property type="match status" value="1"/>
</dbReference>
<dbReference type="PRINTS" id="PR00256">
    <property type="entry name" value="REACTNCENTRE"/>
</dbReference>
<dbReference type="SUPFAM" id="SSF81483">
    <property type="entry name" value="Bacterial photosystem II reaction centre, L and M subunits"/>
    <property type="match status" value="1"/>
</dbReference>
<dbReference type="PROSITE" id="PS00244">
    <property type="entry name" value="REACTION_CENTER"/>
    <property type="match status" value="1"/>
</dbReference>
<protein>
    <recommendedName>
        <fullName evidence="2">Photosystem II D2 protein</fullName>
        <shortName evidence="2">PSII D2 protein</shortName>
        <ecNumber evidence="2">1.10.3.9</ecNumber>
    </recommendedName>
    <alternativeName>
        <fullName evidence="2">Photosystem Q(A) protein</fullName>
    </alternativeName>
</protein>
<keyword id="KW-0007">Acetylation</keyword>
<keyword id="KW-0148">Chlorophyll</keyword>
<keyword id="KW-0150">Chloroplast</keyword>
<keyword id="KW-0157">Chromophore</keyword>
<keyword id="KW-0249">Electron transport</keyword>
<keyword id="KW-0408">Iron</keyword>
<keyword id="KW-0460">Magnesium</keyword>
<keyword id="KW-0472">Membrane</keyword>
<keyword id="KW-0479">Metal-binding</keyword>
<keyword id="KW-0560">Oxidoreductase</keyword>
<keyword id="KW-0597">Phosphoprotein</keyword>
<keyword id="KW-0602">Photosynthesis</keyword>
<keyword id="KW-0604">Photosystem II</keyword>
<keyword id="KW-0934">Plastid</keyword>
<keyword id="KW-0793">Thylakoid</keyword>
<keyword id="KW-0812">Transmembrane</keyword>
<keyword id="KW-1133">Transmembrane helix</keyword>
<keyword id="KW-0813">Transport</keyword>
<name>PSBD_LOLPR</name>
<organism>
    <name type="scientific">Lolium perenne</name>
    <name type="common">Perennial ryegrass</name>
    <dbReference type="NCBI Taxonomy" id="4522"/>
    <lineage>
        <taxon>Eukaryota</taxon>
        <taxon>Viridiplantae</taxon>
        <taxon>Streptophyta</taxon>
        <taxon>Embryophyta</taxon>
        <taxon>Tracheophyta</taxon>
        <taxon>Spermatophyta</taxon>
        <taxon>Magnoliopsida</taxon>
        <taxon>Liliopsida</taxon>
        <taxon>Poales</taxon>
        <taxon>Poaceae</taxon>
        <taxon>BOP clade</taxon>
        <taxon>Pooideae</taxon>
        <taxon>Poodae</taxon>
        <taxon>Poeae</taxon>
        <taxon>Poeae Chloroplast Group 2 (Poeae type)</taxon>
        <taxon>Loliodinae</taxon>
        <taxon>Loliinae</taxon>
        <taxon>Lolium</taxon>
    </lineage>
</organism>